<keyword id="KW-0106">Calcium</keyword>
<keyword id="KW-0165">Cleavage on pair of basic residues</keyword>
<keyword id="KW-1015">Disulfide bond</keyword>
<keyword id="KW-0325">Glycoprotein</keyword>
<keyword id="KW-0378">Hydrolase</keyword>
<keyword id="KW-0472">Membrane</keyword>
<keyword id="KW-0479">Metal-binding</keyword>
<keyword id="KW-0482">Metalloprotease</keyword>
<keyword id="KW-0645">Protease</keyword>
<keyword id="KW-1185">Reference proteome</keyword>
<keyword id="KW-0677">Repeat</keyword>
<keyword id="KW-0732">Signal</keyword>
<keyword id="KW-0812">Transmembrane</keyword>
<keyword id="KW-1133">Transmembrane helix</keyword>
<keyword id="KW-0862">Zinc</keyword>
<keyword id="KW-0865">Zymogen</keyword>
<sequence length="657" mass="74666">MGSDRSALGRPGCTGSCLSSRASLLPLLLVLLDCLGHGTASKDAEVYAAENWLRLYGYLPQPSRHMSTMRSAQILASALAEMQSFYGIPVTGVLDEETKTWMKRPRCGVPDQFGVHVKANLRRRRKRYTLTGKAWNNYHLTFSIQNYTEKLGWYNSMEAVRRAFQVWEQVTPLVFQEVSYDDIRLRRRAEADIMVLFASGFHGDSSPFDGVGGFLAHAYFPGPGLGGDTHFDADEPWTFSSTDLHGISLFLVAVHELGHALGLEHSSNPSAIMAPFYQWMDTDNFQLPEDDLRGIQQLYGSPDGKPQPTRPLPTVRPRRPGRPDHQPPRPPQPPHPGGKPERPPKPGPPPQPRATERPDQYGPNICDGNFDTVAVLRGEMFVFKGRWFWRVRHNRVLDNYPMPIGHFWRGLPGNISAAYERQDGHFVFFKGNRYWLFREANLEPGYPQPLSSYGTDIPYDRIDTAIWWEPTGHTFFFQADRYWRFNEETQHGDPGYPKPISVWQGIPTSPKGAFLSNDAAYTYFYKGTKYWKFNNERLRMEPGHPKSILRDFMGCQEHVEPRSRWPDVARPPFNPNGGAEPEADGDSKEENAGDKDEGSRVVVQMEEVVRTVNVVMVLVPLLLLLCILGLAFALVQMQRKGAPRMLLYCKRSLQEWV</sequence>
<proteinExistence type="evidence at transcript level"/>
<comment type="function">
    <text>Endopeptidase that degrades various components of the extracellular matrix. May activate progelatinase A.</text>
</comment>
<comment type="cofactor">
    <cofactor evidence="1">
        <name>Zn(2+)</name>
        <dbReference type="ChEBI" id="CHEBI:29105"/>
    </cofactor>
    <text evidence="1">Binds 1 zinc ion per subunit.</text>
</comment>
<comment type="cofactor">
    <cofactor evidence="1">
        <name>Ca(2+)</name>
        <dbReference type="ChEBI" id="CHEBI:29108"/>
    </cofactor>
</comment>
<comment type="subcellular location">
    <subcellularLocation>
        <location evidence="5">Membrane</location>
        <topology evidence="5">Single-pass type I membrane protein</topology>
        <orientation evidence="5">Extracellular side</orientation>
    </subcellularLocation>
</comment>
<comment type="domain">
    <text>The conserved cysteine present in the cysteine-switch motif binds the catalytic zinc ion, thus inhibiting the enzyme. The dissociation of the cysteine from the zinc ion upon the activation-peptide release activates the enzyme.</text>
</comment>
<comment type="PTM">
    <text evidence="1">The precursor is cleaved by a furin endopeptidase.</text>
</comment>
<comment type="similarity">
    <text evidence="5">Belongs to the peptidase M10A family.</text>
</comment>
<reference key="1">
    <citation type="journal article" date="1997" name="FEBS Lett.">
        <title>Isolation of a mouse MT2-MMP gene from a lung cDNA library and identification of its product.</title>
        <authorList>
            <person name="Tanaka M."/>
            <person name="Sato H."/>
            <person name="Takino T."/>
            <person name="Iwata K."/>
            <person name="Inoue M."/>
            <person name="Seiki M."/>
        </authorList>
    </citation>
    <scope>NUCLEOTIDE SEQUENCE [MRNA]</scope>
    <source>
        <tissue>Lung</tissue>
    </source>
</reference>
<reference key="2">
    <citation type="journal article" date="2004" name="Genome Res.">
        <title>The status, quality, and expansion of the NIH full-length cDNA project: the Mammalian Gene Collection (MGC).</title>
        <authorList>
            <consortium name="The MGC Project Team"/>
        </authorList>
    </citation>
    <scope>NUCLEOTIDE SEQUENCE [LARGE SCALE MRNA]</scope>
    <source>
        <strain>NMRI</strain>
        <tissue>Mammary gland</tissue>
        <tissue>Olfactory epithelium</tissue>
    </source>
</reference>
<gene>
    <name type="primary">Mmp15</name>
</gene>
<accession>O54732</accession>
<organism>
    <name type="scientific">Mus musculus</name>
    <name type="common">Mouse</name>
    <dbReference type="NCBI Taxonomy" id="10090"/>
    <lineage>
        <taxon>Eukaryota</taxon>
        <taxon>Metazoa</taxon>
        <taxon>Chordata</taxon>
        <taxon>Craniata</taxon>
        <taxon>Vertebrata</taxon>
        <taxon>Euteleostomi</taxon>
        <taxon>Mammalia</taxon>
        <taxon>Eutheria</taxon>
        <taxon>Euarchontoglires</taxon>
        <taxon>Glires</taxon>
        <taxon>Rodentia</taxon>
        <taxon>Myomorpha</taxon>
        <taxon>Muroidea</taxon>
        <taxon>Muridae</taxon>
        <taxon>Murinae</taxon>
        <taxon>Mus</taxon>
        <taxon>Mus</taxon>
    </lineage>
</organism>
<evidence type="ECO:0000250" key="1"/>
<evidence type="ECO:0000255" key="2"/>
<evidence type="ECO:0000255" key="3">
    <source>
        <dbReference type="PROSITE-ProRule" id="PRU10095"/>
    </source>
</evidence>
<evidence type="ECO:0000256" key="4">
    <source>
        <dbReference type="SAM" id="MobiDB-lite"/>
    </source>
</evidence>
<evidence type="ECO:0000305" key="5"/>
<name>MMP15_MOUSE</name>
<protein>
    <recommendedName>
        <fullName>Matrix metalloproteinase-15</fullName>
        <shortName>MMP-15</shortName>
        <ecNumber>3.4.24.-</ecNumber>
    </recommendedName>
    <alternativeName>
        <fullName>Membrane-type matrix metalloproteinase 2</fullName>
        <shortName>MT-MMP 2</shortName>
        <shortName>MTMMP2</shortName>
    </alternativeName>
    <alternativeName>
        <fullName>Membrane-type-2 matrix metalloproteinase</fullName>
        <shortName>MT2-MMP</shortName>
        <shortName>MT2MMP</shortName>
    </alternativeName>
</protein>
<feature type="signal peptide" evidence="2">
    <location>
        <begin position="1"/>
        <end position="36"/>
    </location>
</feature>
<feature type="propeptide" id="PRO_0000028810" evidence="1">
    <location>
        <begin position="37"/>
        <end position="127"/>
    </location>
</feature>
<feature type="chain" id="PRO_0000028811" description="Matrix metalloproteinase-15">
    <location>
        <begin position="128"/>
        <end position="657"/>
    </location>
</feature>
<feature type="topological domain" description="Extracellular" evidence="2">
    <location>
        <begin position="128"/>
        <end position="614"/>
    </location>
</feature>
<feature type="transmembrane region" description="Helical" evidence="2">
    <location>
        <begin position="615"/>
        <end position="635"/>
    </location>
</feature>
<feature type="topological domain" description="Cytoplasmic" evidence="2">
    <location>
        <begin position="636"/>
        <end position="657"/>
    </location>
</feature>
<feature type="repeat" description="Hemopexin 1">
    <location>
        <begin position="363"/>
        <end position="411"/>
    </location>
</feature>
<feature type="repeat" description="Hemopexin 2">
    <location>
        <begin position="412"/>
        <end position="457"/>
    </location>
</feature>
<feature type="repeat" description="Hemopexin 3">
    <location>
        <begin position="459"/>
        <end position="507"/>
    </location>
</feature>
<feature type="repeat" description="Hemopexin 4">
    <location>
        <begin position="508"/>
        <end position="555"/>
    </location>
</feature>
<feature type="region of interest" description="Disordered" evidence="4">
    <location>
        <begin position="295"/>
        <end position="365"/>
    </location>
</feature>
<feature type="region of interest" description="Disordered" evidence="4">
    <location>
        <begin position="561"/>
        <end position="599"/>
    </location>
</feature>
<feature type="short sequence motif" description="Cysteine switch" evidence="1">
    <location>
        <begin position="105"/>
        <end position="112"/>
    </location>
</feature>
<feature type="compositionally biased region" description="Pro residues" evidence="4">
    <location>
        <begin position="328"/>
        <end position="337"/>
    </location>
</feature>
<feature type="compositionally biased region" description="Basic and acidic residues" evidence="4">
    <location>
        <begin position="585"/>
        <end position="599"/>
    </location>
</feature>
<feature type="active site" evidence="3">
    <location>
        <position position="256"/>
    </location>
</feature>
<feature type="binding site" description="in inhibited form" evidence="1">
    <location>
        <position position="107"/>
    </location>
    <ligand>
        <name>Zn(2+)</name>
        <dbReference type="ChEBI" id="CHEBI:29105"/>
        <note>catalytic</note>
    </ligand>
</feature>
<feature type="binding site" evidence="3">
    <location>
        <position position="255"/>
    </location>
    <ligand>
        <name>Zn(2+)</name>
        <dbReference type="ChEBI" id="CHEBI:29105"/>
        <note>catalytic</note>
    </ligand>
</feature>
<feature type="binding site" evidence="3">
    <location>
        <position position="259"/>
    </location>
    <ligand>
        <name>Zn(2+)</name>
        <dbReference type="ChEBI" id="CHEBI:29105"/>
        <note>catalytic</note>
    </ligand>
</feature>
<feature type="binding site" evidence="3">
    <location>
        <position position="265"/>
    </location>
    <ligand>
        <name>Zn(2+)</name>
        <dbReference type="ChEBI" id="CHEBI:29105"/>
        <note>catalytic</note>
    </ligand>
</feature>
<feature type="glycosylation site" description="N-linked (GlcNAc...) asparagine" evidence="2">
    <location>
        <position position="146"/>
    </location>
</feature>
<feature type="glycosylation site" description="N-linked (GlcNAc...) asparagine" evidence="2">
    <location>
        <position position="414"/>
    </location>
</feature>
<feature type="disulfide bond" evidence="1">
    <location>
        <begin position="366"/>
        <end position="555"/>
    </location>
</feature>
<dbReference type="EC" id="3.4.24.-"/>
<dbReference type="EMBL" id="D86332">
    <property type="protein sequence ID" value="BAA23667.1"/>
    <property type="molecule type" value="mRNA"/>
</dbReference>
<dbReference type="EMBL" id="BC047278">
    <property type="protein sequence ID" value="AAH47278.1"/>
    <property type="molecule type" value="mRNA"/>
</dbReference>
<dbReference type="EMBL" id="BC057952">
    <property type="protein sequence ID" value="AAH57952.1"/>
    <property type="molecule type" value="mRNA"/>
</dbReference>
<dbReference type="CCDS" id="CCDS22561.1"/>
<dbReference type="RefSeq" id="NP_032635.1">
    <property type="nucleotide sequence ID" value="NM_008609.4"/>
</dbReference>
<dbReference type="SMR" id="O54732"/>
<dbReference type="FunCoup" id="O54732">
    <property type="interactions" value="6"/>
</dbReference>
<dbReference type="STRING" id="10090.ENSMUSP00000034243"/>
<dbReference type="MEROPS" id="M10.015"/>
<dbReference type="GlyCosmos" id="O54732">
    <property type="glycosylation" value="2 sites, No reported glycans"/>
</dbReference>
<dbReference type="GlyGen" id="O54732">
    <property type="glycosylation" value="2 sites, 1 N-linked glycan (1 site)"/>
</dbReference>
<dbReference type="iPTMnet" id="O54732"/>
<dbReference type="PhosphoSitePlus" id="O54732"/>
<dbReference type="SwissPalm" id="O54732"/>
<dbReference type="PaxDb" id="10090-ENSMUSP00000034243"/>
<dbReference type="PeptideAtlas" id="O54732"/>
<dbReference type="ProteomicsDB" id="295685"/>
<dbReference type="Antibodypedia" id="3619">
    <property type="antibodies" value="480 antibodies from 38 providers"/>
</dbReference>
<dbReference type="DNASU" id="17388"/>
<dbReference type="Ensembl" id="ENSMUST00000034243.7">
    <property type="protein sequence ID" value="ENSMUSP00000034243.6"/>
    <property type="gene ID" value="ENSMUSG00000031790.9"/>
</dbReference>
<dbReference type="GeneID" id="17388"/>
<dbReference type="KEGG" id="mmu:17388"/>
<dbReference type="UCSC" id="uc009myh.1">
    <property type="organism name" value="mouse"/>
</dbReference>
<dbReference type="AGR" id="MGI:109320"/>
<dbReference type="CTD" id="4324"/>
<dbReference type="MGI" id="MGI:109320">
    <property type="gene designation" value="Mmp15"/>
</dbReference>
<dbReference type="VEuPathDB" id="HostDB:ENSMUSG00000031790"/>
<dbReference type="eggNOG" id="KOG1565">
    <property type="taxonomic scope" value="Eukaryota"/>
</dbReference>
<dbReference type="GeneTree" id="ENSGT00940000156939"/>
<dbReference type="HOGENOM" id="CLU_015489_8_1_1"/>
<dbReference type="InParanoid" id="O54732"/>
<dbReference type="OMA" id="GCQEHVD"/>
<dbReference type="OrthoDB" id="406838at2759"/>
<dbReference type="PhylomeDB" id="O54732"/>
<dbReference type="TreeFam" id="TF352396"/>
<dbReference type="BRENDA" id="3.4.24.B5">
    <property type="organism ID" value="3474"/>
</dbReference>
<dbReference type="Reactome" id="R-MMU-1442490">
    <property type="pathway name" value="Collagen degradation"/>
</dbReference>
<dbReference type="Reactome" id="R-MMU-1592389">
    <property type="pathway name" value="Activation of Matrix Metalloproteinases"/>
</dbReference>
<dbReference type="BioGRID-ORCS" id="17388">
    <property type="hits" value="2 hits in 78 CRISPR screens"/>
</dbReference>
<dbReference type="ChiTaRS" id="Mmp15">
    <property type="organism name" value="mouse"/>
</dbReference>
<dbReference type="PRO" id="PR:O54732"/>
<dbReference type="Proteomes" id="UP000000589">
    <property type="component" value="Chromosome 8"/>
</dbReference>
<dbReference type="RNAct" id="O54732">
    <property type="molecule type" value="protein"/>
</dbReference>
<dbReference type="Bgee" id="ENSMUSG00000031790">
    <property type="expression patterns" value="Expressed in external carotid artery and 240 other cell types or tissues"/>
</dbReference>
<dbReference type="GO" id="GO:0031012">
    <property type="term" value="C:extracellular matrix"/>
    <property type="evidence" value="ECO:0007669"/>
    <property type="project" value="InterPro"/>
</dbReference>
<dbReference type="GO" id="GO:0016020">
    <property type="term" value="C:membrane"/>
    <property type="evidence" value="ECO:0007669"/>
    <property type="project" value="UniProtKB-SubCell"/>
</dbReference>
<dbReference type="GO" id="GO:0004222">
    <property type="term" value="F:metalloendopeptidase activity"/>
    <property type="evidence" value="ECO:0000250"/>
    <property type="project" value="MGI"/>
</dbReference>
<dbReference type="GO" id="GO:0008270">
    <property type="term" value="F:zinc ion binding"/>
    <property type="evidence" value="ECO:0007669"/>
    <property type="project" value="InterPro"/>
</dbReference>
<dbReference type="GO" id="GO:0035987">
    <property type="term" value="P:endodermal cell differentiation"/>
    <property type="evidence" value="ECO:0007669"/>
    <property type="project" value="Ensembl"/>
</dbReference>
<dbReference type="GO" id="GO:0006508">
    <property type="term" value="P:proteolysis"/>
    <property type="evidence" value="ECO:0007669"/>
    <property type="project" value="UniProtKB-KW"/>
</dbReference>
<dbReference type="GO" id="GO:0032355">
    <property type="term" value="P:response to estradiol"/>
    <property type="evidence" value="ECO:0007669"/>
    <property type="project" value="Ensembl"/>
</dbReference>
<dbReference type="CDD" id="cd00094">
    <property type="entry name" value="HX"/>
    <property type="match status" value="1"/>
</dbReference>
<dbReference type="CDD" id="cd04278">
    <property type="entry name" value="ZnMc_MMP"/>
    <property type="match status" value="1"/>
</dbReference>
<dbReference type="FunFam" id="3.40.390.10:FF:000005">
    <property type="entry name" value="Matrix metallopeptidase 16"/>
    <property type="match status" value="1"/>
</dbReference>
<dbReference type="FunFam" id="2.110.10.10:FF:000001">
    <property type="entry name" value="Matrix metallopeptidase 24"/>
    <property type="match status" value="1"/>
</dbReference>
<dbReference type="Gene3D" id="3.40.390.10">
    <property type="entry name" value="Collagenase (Catalytic Domain)"/>
    <property type="match status" value="1"/>
</dbReference>
<dbReference type="Gene3D" id="2.110.10.10">
    <property type="entry name" value="Hemopexin-like domain"/>
    <property type="match status" value="1"/>
</dbReference>
<dbReference type="InterPro" id="IPR000585">
    <property type="entry name" value="Hemopexin-like_dom"/>
</dbReference>
<dbReference type="InterPro" id="IPR036375">
    <property type="entry name" value="Hemopexin-like_dom_sf"/>
</dbReference>
<dbReference type="InterPro" id="IPR018487">
    <property type="entry name" value="Hemopexin-like_repeat"/>
</dbReference>
<dbReference type="InterPro" id="IPR018486">
    <property type="entry name" value="Hemopexin_CS"/>
</dbReference>
<dbReference type="InterPro" id="IPR033739">
    <property type="entry name" value="M10A_MMP"/>
</dbReference>
<dbReference type="InterPro" id="IPR024079">
    <property type="entry name" value="MetalloPept_cat_dom_sf"/>
</dbReference>
<dbReference type="InterPro" id="IPR001818">
    <property type="entry name" value="Pept_M10_metallopeptidase"/>
</dbReference>
<dbReference type="InterPro" id="IPR021190">
    <property type="entry name" value="Pept_M10A"/>
</dbReference>
<dbReference type="InterPro" id="IPR021805">
    <property type="entry name" value="Pept_M10A_metallopeptidase_C"/>
</dbReference>
<dbReference type="InterPro" id="IPR021158">
    <property type="entry name" value="Pept_M10A_Zn_BS"/>
</dbReference>
<dbReference type="InterPro" id="IPR006026">
    <property type="entry name" value="Peptidase_Metallo"/>
</dbReference>
<dbReference type="InterPro" id="IPR002477">
    <property type="entry name" value="Peptidoglycan-bd-like"/>
</dbReference>
<dbReference type="InterPro" id="IPR036365">
    <property type="entry name" value="PGBD-like_sf"/>
</dbReference>
<dbReference type="PANTHER" id="PTHR10201">
    <property type="entry name" value="MATRIX METALLOPROTEINASE"/>
    <property type="match status" value="1"/>
</dbReference>
<dbReference type="PANTHER" id="PTHR10201:SF25">
    <property type="entry name" value="MATRIX METALLOPROTEINASE-15"/>
    <property type="match status" value="1"/>
</dbReference>
<dbReference type="Pfam" id="PF11857">
    <property type="entry name" value="DUF3377"/>
    <property type="match status" value="1"/>
</dbReference>
<dbReference type="Pfam" id="PF00045">
    <property type="entry name" value="Hemopexin"/>
    <property type="match status" value="4"/>
</dbReference>
<dbReference type="Pfam" id="PF00413">
    <property type="entry name" value="Peptidase_M10"/>
    <property type="match status" value="1"/>
</dbReference>
<dbReference type="Pfam" id="PF01471">
    <property type="entry name" value="PG_binding_1"/>
    <property type="match status" value="1"/>
</dbReference>
<dbReference type="PIRSF" id="PIRSF001191">
    <property type="entry name" value="Peptidase_M10A_matrix"/>
    <property type="match status" value="1"/>
</dbReference>
<dbReference type="PRINTS" id="PR00138">
    <property type="entry name" value="MATRIXIN"/>
</dbReference>
<dbReference type="SMART" id="SM00120">
    <property type="entry name" value="HX"/>
    <property type="match status" value="4"/>
</dbReference>
<dbReference type="SMART" id="SM00235">
    <property type="entry name" value="ZnMc"/>
    <property type="match status" value="1"/>
</dbReference>
<dbReference type="SUPFAM" id="SSF50923">
    <property type="entry name" value="Hemopexin-like domain"/>
    <property type="match status" value="1"/>
</dbReference>
<dbReference type="SUPFAM" id="SSF55486">
    <property type="entry name" value="Metalloproteases ('zincins'), catalytic domain"/>
    <property type="match status" value="1"/>
</dbReference>
<dbReference type="SUPFAM" id="SSF47090">
    <property type="entry name" value="PGBD-like"/>
    <property type="match status" value="1"/>
</dbReference>
<dbReference type="PROSITE" id="PS00546">
    <property type="entry name" value="CYSTEINE_SWITCH"/>
    <property type="match status" value="1"/>
</dbReference>
<dbReference type="PROSITE" id="PS00024">
    <property type="entry name" value="HEMOPEXIN"/>
    <property type="match status" value="1"/>
</dbReference>
<dbReference type="PROSITE" id="PS51642">
    <property type="entry name" value="HEMOPEXIN_2"/>
    <property type="match status" value="4"/>
</dbReference>
<dbReference type="PROSITE" id="PS00142">
    <property type="entry name" value="ZINC_PROTEASE"/>
    <property type="match status" value="1"/>
</dbReference>